<keyword id="KW-0028">Amino-acid biosynthesis</keyword>
<keyword id="KW-0057">Aromatic amino acid biosynthesis</keyword>
<keyword id="KW-0521">NADP</keyword>
<keyword id="KW-0560">Oxidoreductase</keyword>
<keyword id="KW-1185">Reference proteome</keyword>
<organism>
    <name type="scientific">Pseudoalteromonas translucida (strain TAC 125)</name>
    <dbReference type="NCBI Taxonomy" id="326442"/>
    <lineage>
        <taxon>Bacteria</taxon>
        <taxon>Pseudomonadati</taxon>
        <taxon>Pseudomonadota</taxon>
        <taxon>Gammaproteobacteria</taxon>
        <taxon>Alteromonadales</taxon>
        <taxon>Pseudoalteromonadaceae</taxon>
        <taxon>Pseudoalteromonas</taxon>
    </lineage>
</organism>
<dbReference type="EC" id="1.1.1.25" evidence="1"/>
<dbReference type="EMBL" id="CR954246">
    <property type="protein sequence ID" value="CAI85145.1"/>
    <property type="molecule type" value="Genomic_DNA"/>
</dbReference>
<dbReference type="SMR" id="Q3IDI6"/>
<dbReference type="STRING" id="326442.PSHAa0031"/>
<dbReference type="KEGG" id="pha:PSHAa0031"/>
<dbReference type="PATRIC" id="fig|326442.8.peg.33"/>
<dbReference type="eggNOG" id="COG0169">
    <property type="taxonomic scope" value="Bacteria"/>
</dbReference>
<dbReference type="HOGENOM" id="CLU_044063_2_1_6"/>
<dbReference type="BioCyc" id="PHAL326442:PSHA_RS00155-MONOMER"/>
<dbReference type="UniPathway" id="UPA00053">
    <property type="reaction ID" value="UER00087"/>
</dbReference>
<dbReference type="Proteomes" id="UP000006843">
    <property type="component" value="Chromosome I"/>
</dbReference>
<dbReference type="GO" id="GO:0005829">
    <property type="term" value="C:cytosol"/>
    <property type="evidence" value="ECO:0007669"/>
    <property type="project" value="TreeGrafter"/>
</dbReference>
<dbReference type="GO" id="GO:0050661">
    <property type="term" value="F:NADP binding"/>
    <property type="evidence" value="ECO:0007669"/>
    <property type="project" value="InterPro"/>
</dbReference>
<dbReference type="GO" id="GO:0004764">
    <property type="term" value="F:shikimate 3-dehydrogenase (NADP+) activity"/>
    <property type="evidence" value="ECO:0007669"/>
    <property type="project" value="UniProtKB-UniRule"/>
</dbReference>
<dbReference type="GO" id="GO:0008652">
    <property type="term" value="P:amino acid biosynthetic process"/>
    <property type="evidence" value="ECO:0007669"/>
    <property type="project" value="UniProtKB-KW"/>
</dbReference>
<dbReference type="GO" id="GO:0009073">
    <property type="term" value="P:aromatic amino acid family biosynthetic process"/>
    <property type="evidence" value="ECO:0007669"/>
    <property type="project" value="UniProtKB-KW"/>
</dbReference>
<dbReference type="GO" id="GO:0009423">
    <property type="term" value="P:chorismate biosynthetic process"/>
    <property type="evidence" value="ECO:0007669"/>
    <property type="project" value="UniProtKB-UniRule"/>
</dbReference>
<dbReference type="GO" id="GO:0019632">
    <property type="term" value="P:shikimate metabolic process"/>
    <property type="evidence" value="ECO:0007669"/>
    <property type="project" value="InterPro"/>
</dbReference>
<dbReference type="CDD" id="cd01065">
    <property type="entry name" value="NAD_bind_Shikimate_DH"/>
    <property type="match status" value="1"/>
</dbReference>
<dbReference type="FunFam" id="3.40.50.10860:FF:000006">
    <property type="entry name" value="Shikimate dehydrogenase (NADP(+))"/>
    <property type="match status" value="1"/>
</dbReference>
<dbReference type="Gene3D" id="3.40.50.10860">
    <property type="entry name" value="Leucine Dehydrogenase, chain A, domain 1"/>
    <property type="match status" value="1"/>
</dbReference>
<dbReference type="Gene3D" id="3.40.50.720">
    <property type="entry name" value="NAD(P)-binding Rossmann-like Domain"/>
    <property type="match status" value="1"/>
</dbReference>
<dbReference type="HAMAP" id="MF_00222">
    <property type="entry name" value="Shikimate_DH_AroE"/>
    <property type="match status" value="1"/>
</dbReference>
<dbReference type="InterPro" id="IPR046346">
    <property type="entry name" value="Aminoacid_DH-like_N_sf"/>
</dbReference>
<dbReference type="InterPro" id="IPR036291">
    <property type="entry name" value="NAD(P)-bd_dom_sf"/>
</dbReference>
<dbReference type="InterPro" id="IPR011342">
    <property type="entry name" value="Shikimate_DH"/>
</dbReference>
<dbReference type="InterPro" id="IPR013708">
    <property type="entry name" value="Shikimate_DH-bd_N"/>
</dbReference>
<dbReference type="InterPro" id="IPR022893">
    <property type="entry name" value="Shikimate_DH_fam"/>
</dbReference>
<dbReference type="InterPro" id="IPR006151">
    <property type="entry name" value="Shikm_DH/Glu-tRNA_Rdtase"/>
</dbReference>
<dbReference type="NCBIfam" id="TIGR00507">
    <property type="entry name" value="aroE"/>
    <property type="match status" value="1"/>
</dbReference>
<dbReference type="NCBIfam" id="NF001310">
    <property type="entry name" value="PRK00258.1-2"/>
    <property type="match status" value="1"/>
</dbReference>
<dbReference type="PANTHER" id="PTHR21089:SF1">
    <property type="entry name" value="BIFUNCTIONAL 3-DEHYDROQUINATE DEHYDRATASE_SHIKIMATE DEHYDROGENASE, CHLOROPLASTIC"/>
    <property type="match status" value="1"/>
</dbReference>
<dbReference type="PANTHER" id="PTHR21089">
    <property type="entry name" value="SHIKIMATE DEHYDROGENASE"/>
    <property type="match status" value="1"/>
</dbReference>
<dbReference type="Pfam" id="PF01488">
    <property type="entry name" value="Shikimate_DH"/>
    <property type="match status" value="1"/>
</dbReference>
<dbReference type="Pfam" id="PF08501">
    <property type="entry name" value="Shikimate_dh_N"/>
    <property type="match status" value="1"/>
</dbReference>
<dbReference type="SUPFAM" id="SSF53223">
    <property type="entry name" value="Aminoacid dehydrogenase-like, N-terminal domain"/>
    <property type="match status" value="1"/>
</dbReference>
<dbReference type="SUPFAM" id="SSF51735">
    <property type="entry name" value="NAD(P)-binding Rossmann-fold domains"/>
    <property type="match status" value="1"/>
</dbReference>
<accession>Q3IDI6</accession>
<feature type="chain" id="PRO_1000021317" description="Shikimate dehydrogenase (NADP(+))">
    <location>
        <begin position="1"/>
        <end position="274"/>
    </location>
</feature>
<feature type="active site" description="Proton acceptor" evidence="1">
    <location>
        <position position="65"/>
    </location>
</feature>
<feature type="binding site" evidence="1">
    <location>
        <begin position="14"/>
        <end position="16"/>
    </location>
    <ligand>
        <name>shikimate</name>
        <dbReference type="ChEBI" id="CHEBI:36208"/>
    </ligand>
</feature>
<feature type="binding site" evidence="1">
    <location>
        <position position="61"/>
    </location>
    <ligand>
        <name>shikimate</name>
        <dbReference type="ChEBI" id="CHEBI:36208"/>
    </ligand>
</feature>
<feature type="binding site" evidence="1">
    <location>
        <position position="86"/>
    </location>
    <ligand>
        <name>shikimate</name>
        <dbReference type="ChEBI" id="CHEBI:36208"/>
    </ligand>
</feature>
<feature type="binding site" evidence="1">
    <location>
        <position position="102"/>
    </location>
    <ligand>
        <name>shikimate</name>
        <dbReference type="ChEBI" id="CHEBI:36208"/>
    </ligand>
</feature>
<feature type="binding site" evidence="1">
    <location>
        <begin position="126"/>
        <end position="130"/>
    </location>
    <ligand>
        <name>NADP(+)</name>
        <dbReference type="ChEBI" id="CHEBI:58349"/>
    </ligand>
</feature>
<feature type="binding site" evidence="1">
    <location>
        <begin position="150"/>
        <end position="155"/>
    </location>
    <ligand>
        <name>NADP(+)</name>
        <dbReference type="ChEBI" id="CHEBI:58349"/>
    </ligand>
</feature>
<feature type="binding site" evidence="1">
    <location>
        <position position="214"/>
    </location>
    <ligand>
        <name>NADP(+)</name>
        <dbReference type="ChEBI" id="CHEBI:58349"/>
    </ligand>
</feature>
<feature type="binding site" evidence="1">
    <location>
        <position position="216"/>
    </location>
    <ligand>
        <name>shikimate</name>
        <dbReference type="ChEBI" id="CHEBI:36208"/>
    </ligand>
</feature>
<feature type="binding site" evidence="1">
    <location>
        <position position="239"/>
    </location>
    <ligand>
        <name>NADP(+)</name>
        <dbReference type="ChEBI" id="CHEBI:58349"/>
    </ligand>
</feature>
<evidence type="ECO:0000255" key="1">
    <source>
        <dbReference type="HAMAP-Rule" id="MF_00222"/>
    </source>
</evidence>
<gene>
    <name evidence="1" type="primary">aroE</name>
    <name type="ordered locus">PSHAa0031</name>
</gene>
<proteinExistence type="inferred from homology"/>
<protein>
    <recommendedName>
        <fullName evidence="1">Shikimate dehydrogenase (NADP(+))</fullName>
        <shortName evidence="1">SDH</shortName>
        <ecNumber evidence="1">1.1.1.25</ecNumber>
    </recommendedName>
</protein>
<name>AROE_PSET1</name>
<comment type="function">
    <text evidence="1">Involved in the biosynthesis of the chorismate, which leads to the biosynthesis of aromatic amino acids. Catalyzes the reversible NADPH linked reduction of 3-dehydroshikimate (DHSA) to yield shikimate (SA).</text>
</comment>
<comment type="catalytic activity">
    <reaction evidence="1">
        <text>shikimate + NADP(+) = 3-dehydroshikimate + NADPH + H(+)</text>
        <dbReference type="Rhea" id="RHEA:17737"/>
        <dbReference type="ChEBI" id="CHEBI:15378"/>
        <dbReference type="ChEBI" id="CHEBI:16630"/>
        <dbReference type="ChEBI" id="CHEBI:36208"/>
        <dbReference type="ChEBI" id="CHEBI:57783"/>
        <dbReference type="ChEBI" id="CHEBI:58349"/>
        <dbReference type="EC" id="1.1.1.25"/>
    </reaction>
</comment>
<comment type="pathway">
    <text evidence="1">Metabolic intermediate biosynthesis; chorismate biosynthesis; chorismate from D-erythrose 4-phosphate and phosphoenolpyruvate: step 4/7.</text>
</comment>
<comment type="subunit">
    <text evidence="1">Homodimer.</text>
</comment>
<comment type="similarity">
    <text evidence="1">Belongs to the shikimate dehydrogenase family.</text>
</comment>
<reference key="1">
    <citation type="journal article" date="2005" name="Genome Res.">
        <title>Coping with cold: the genome of the versatile marine Antarctica bacterium Pseudoalteromonas haloplanktis TAC125.</title>
        <authorList>
            <person name="Medigue C."/>
            <person name="Krin E."/>
            <person name="Pascal G."/>
            <person name="Barbe V."/>
            <person name="Bernsel A."/>
            <person name="Bertin P.N."/>
            <person name="Cheung F."/>
            <person name="Cruveiller S."/>
            <person name="D'Amico S."/>
            <person name="Duilio A."/>
            <person name="Fang G."/>
            <person name="Feller G."/>
            <person name="Ho C."/>
            <person name="Mangenot S."/>
            <person name="Marino G."/>
            <person name="Nilsson J."/>
            <person name="Parrilli E."/>
            <person name="Rocha E.P.C."/>
            <person name="Rouy Z."/>
            <person name="Sekowska A."/>
            <person name="Tutino M.L."/>
            <person name="Vallenet D."/>
            <person name="von Heijne G."/>
            <person name="Danchin A."/>
        </authorList>
    </citation>
    <scope>NUCLEOTIDE SEQUENCE [LARGE SCALE GENOMIC DNA]</scope>
    <source>
        <strain>TAC 125</strain>
    </source>
</reference>
<sequence>MDKYAVFGNPIKHSKSPAIHKQFAISLGEQIDYRAILAPIDNFEKTVSNFFAQGGKGANVTMPFKEQAFAMADELTPLAKIVGAVNTLKKQADGTLLGDNTDGIGFVSDLLANNVSITGKRILIIGAGGAARGVVLPLLDHQPQEVVIVNRTAEKAQNLAKLFAQHGNVSGYGFNNLPENDYALIINSTSSSMNDELPALDQKHITNCEVAYDMFYSLQNTIFMNWVAQYNSKTKLLDGSGMLVGQAAQAYYVWRNKMPAILPVVNALKQGALT</sequence>